<keyword id="KW-0066">ATP synthesis</keyword>
<keyword id="KW-0067">ATP-binding</keyword>
<keyword id="KW-0139">CF(1)</keyword>
<keyword id="KW-0150">Chloroplast</keyword>
<keyword id="KW-0375">Hydrogen ion transport</keyword>
<keyword id="KW-0406">Ion transport</keyword>
<keyword id="KW-0472">Membrane</keyword>
<keyword id="KW-0547">Nucleotide-binding</keyword>
<keyword id="KW-0934">Plastid</keyword>
<keyword id="KW-0793">Thylakoid</keyword>
<keyword id="KW-1278">Translocase</keyword>
<keyword id="KW-0813">Transport</keyword>
<geneLocation type="chloroplast"/>
<gene>
    <name evidence="1" type="primary">atpB</name>
</gene>
<evidence type="ECO:0000255" key="1">
    <source>
        <dbReference type="HAMAP-Rule" id="MF_01347"/>
    </source>
</evidence>
<evidence type="ECO:0000305" key="2"/>
<feature type="chain" id="PRO_0000254448" description="ATP synthase subunit beta, chloroplastic">
    <location>
        <begin position="1"/>
        <end position="495"/>
    </location>
</feature>
<feature type="binding site" evidence="1">
    <location>
        <begin position="172"/>
        <end position="179"/>
    </location>
    <ligand>
        <name>ATP</name>
        <dbReference type="ChEBI" id="CHEBI:30616"/>
    </ligand>
</feature>
<feature type="sequence conflict" description="In Ref. 2; AAD50831." evidence="2" ref="2">
    <original>I</original>
    <variation>T</variation>
    <location>
        <position position="3"/>
    </location>
</feature>
<reference key="1">
    <citation type="journal article" date="2003" name="J. Plant Res.">
        <title>Phylogenetic relationships among genera of Massonieae (Hyacinthaceae) inferred from plastid DNA and seed morphology.</title>
        <authorList>
            <person name="Pfosser M.F."/>
            <person name="Wetschnig W."/>
            <person name="Ungar S."/>
            <person name="Prenner G."/>
        </authorList>
    </citation>
    <scope>NUCLEOTIDE SEQUENCE [GENOMIC DNA]</scope>
</reference>
<reference key="2">
    <citation type="submission" date="1999-07" db="EMBL/GenBank/DDBJ databases">
        <title>Molecular sequence phylogenetics of the Monocots.</title>
        <authorList>
            <person name="Hahn W.J."/>
        </authorList>
    </citation>
    <scope>NUCLEOTIDE SEQUENCE [GENOMIC DNA]</scope>
</reference>
<name>ATPB_BOWVO</name>
<dbReference type="EC" id="7.1.2.2" evidence="1"/>
<dbReference type="EMBL" id="AJ508185">
    <property type="protein sequence ID" value="CAD48087.1"/>
    <property type="status" value="ALT_INIT"/>
    <property type="molecule type" value="Genomic_DNA"/>
</dbReference>
<dbReference type="EMBL" id="AF168889">
    <property type="protein sequence ID" value="AAD50831.1"/>
    <property type="molecule type" value="Genomic_DNA"/>
</dbReference>
<dbReference type="SMR" id="Q85V57"/>
<dbReference type="GO" id="GO:0009535">
    <property type="term" value="C:chloroplast thylakoid membrane"/>
    <property type="evidence" value="ECO:0007669"/>
    <property type="project" value="UniProtKB-SubCell"/>
</dbReference>
<dbReference type="GO" id="GO:0005739">
    <property type="term" value="C:mitochondrion"/>
    <property type="evidence" value="ECO:0007669"/>
    <property type="project" value="GOC"/>
</dbReference>
<dbReference type="GO" id="GO:0045259">
    <property type="term" value="C:proton-transporting ATP synthase complex"/>
    <property type="evidence" value="ECO:0007669"/>
    <property type="project" value="UniProtKB-KW"/>
</dbReference>
<dbReference type="GO" id="GO:0005524">
    <property type="term" value="F:ATP binding"/>
    <property type="evidence" value="ECO:0007669"/>
    <property type="project" value="UniProtKB-UniRule"/>
</dbReference>
<dbReference type="GO" id="GO:0016887">
    <property type="term" value="F:ATP hydrolysis activity"/>
    <property type="evidence" value="ECO:0007669"/>
    <property type="project" value="InterPro"/>
</dbReference>
<dbReference type="GO" id="GO:0046933">
    <property type="term" value="F:proton-transporting ATP synthase activity, rotational mechanism"/>
    <property type="evidence" value="ECO:0007669"/>
    <property type="project" value="UniProtKB-UniRule"/>
</dbReference>
<dbReference type="GO" id="GO:0042776">
    <property type="term" value="P:proton motive force-driven mitochondrial ATP synthesis"/>
    <property type="evidence" value="ECO:0007669"/>
    <property type="project" value="TreeGrafter"/>
</dbReference>
<dbReference type="CDD" id="cd18110">
    <property type="entry name" value="ATP-synt_F1_beta_C"/>
    <property type="match status" value="1"/>
</dbReference>
<dbReference type="CDD" id="cd18115">
    <property type="entry name" value="ATP-synt_F1_beta_N"/>
    <property type="match status" value="1"/>
</dbReference>
<dbReference type="CDD" id="cd01133">
    <property type="entry name" value="F1-ATPase_beta_CD"/>
    <property type="match status" value="1"/>
</dbReference>
<dbReference type="FunFam" id="1.10.1140.10:FF:000001">
    <property type="entry name" value="ATP synthase subunit beta"/>
    <property type="match status" value="1"/>
</dbReference>
<dbReference type="FunFam" id="3.40.50.12240:FF:000006">
    <property type="entry name" value="ATP synthase subunit beta"/>
    <property type="match status" value="1"/>
</dbReference>
<dbReference type="FunFam" id="3.40.50.300:FF:000004">
    <property type="entry name" value="ATP synthase subunit beta"/>
    <property type="match status" value="1"/>
</dbReference>
<dbReference type="FunFam" id="2.40.10.170:FF:000002">
    <property type="entry name" value="ATP synthase subunit beta, chloroplastic"/>
    <property type="match status" value="1"/>
</dbReference>
<dbReference type="Gene3D" id="2.40.10.170">
    <property type="match status" value="1"/>
</dbReference>
<dbReference type="Gene3D" id="1.10.1140.10">
    <property type="entry name" value="Bovine Mitochondrial F1-atpase, Atp Synthase Beta Chain, Chain D, domain 3"/>
    <property type="match status" value="1"/>
</dbReference>
<dbReference type="Gene3D" id="3.40.50.300">
    <property type="entry name" value="P-loop containing nucleotide triphosphate hydrolases"/>
    <property type="match status" value="1"/>
</dbReference>
<dbReference type="HAMAP" id="MF_01347">
    <property type="entry name" value="ATP_synth_beta_bact"/>
    <property type="match status" value="1"/>
</dbReference>
<dbReference type="InterPro" id="IPR003593">
    <property type="entry name" value="AAA+_ATPase"/>
</dbReference>
<dbReference type="InterPro" id="IPR055190">
    <property type="entry name" value="ATP-synt_VA_C"/>
</dbReference>
<dbReference type="InterPro" id="IPR005722">
    <property type="entry name" value="ATP_synth_F1_bsu"/>
</dbReference>
<dbReference type="InterPro" id="IPR020003">
    <property type="entry name" value="ATPase_a/bsu_AS"/>
</dbReference>
<dbReference type="InterPro" id="IPR050053">
    <property type="entry name" value="ATPase_alpha/beta_chains"/>
</dbReference>
<dbReference type="InterPro" id="IPR004100">
    <property type="entry name" value="ATPase_F1/V1/A1_a/bsu_N"/>
</dbReference>
<dbReference type="InterPro" id="IPR036121">
    <property type="entry name" value="ATPase_F1/V1/A1_a/bsu_N_sf"/>
</dbReference>
<dbReference type="InterPro" id="IPR000194">
    <property type="entry name" value="ATPase_F1/V1/A1_a/bsu_nucl-bd"/>
</dbReference>
<dbReference type="InterPro" id="IPR024034">
    <property type="entry name" value="ATPase_F1/V1_b/a_C"/>
</dbReference>
<dbReference type="InterPro" id="IPR027417">
    <property type="entry name" value="P-loop_NTPase"/>
</dbReference>
<dbReference type="NCBIfam" id="TIGR01039">
    <property type="entry name" value="atpD"/>
    <property type="match status" value="1"/>
</dbReference>
<dbReference type="PANTHER" id="PTHR15184">
    <property type="entry name" value="ATP SYNTHASE"/>
    <property type="match status" value="1"/>
</dbReference>
<dbReference type="PANTHER" id="PTHR15184:SF71">
    <property type="entry name" value="ATP SYNTHASE SUBUNIT BETA, MITOCHONDRIAL"/>
    <property type="match status" value="1"/>
</dbReference>
<dbReference type="Pfam" id="PF00006">
    <property type="entry name" value="ATP-synt_ab"/>
    <property type="match status" value="1"/>
</dbReference>
<dbReference type="Pfam" id="PF02874">
    <property type="entry name" value="ATP-synt_ab_N"/>
    <property type="match status" value="1"/>
</dbReference>
<dbReference type="Pfam" id="PF22919">
    <property type="entry name" value="ATP-synt_VA_C"/>
    <property type="match status" value="1"/>
</dbReference>
<dbReference type="SMART" id="SM00382">
    <property type="entry name" value="AAA"/>
    <property type="match status" value="1"/>
</dbReference>
<dbReference type="SUPFAM" id="SSF47917">
    <property type="entry name" value="C-terminal domain of alpha and beta subunits of F1 ATP synthase"/>
    <property type="match status" value="1"/>
</dbReference>
<dbReference type="SUPFAM" id="SSF50615">
    <property type="entry name" value="N-terminal domain of alpha and beta subunits of F1 ATP synthase"/>
    <property type="match status" value="1"/>
</dbReference>
<dbReference type="SUPFAM" id="SSF52540">
    <property type="entry name" value="P-loop containing nucleoside triphosphate hydrolases"/>
    <property type="match status" value="1"/>
</dbReference>
<dbReference type="PROSITE" id="PS00152">
    <property type="entry name" value="ATPASE_ALPHA_BETA"/>
    <property type="match status" value="1"/>
</dbReference>
<protein>
    <recommendedName>
        <fullName evidence="1">ATP synthase subunit beta, chloroplastic</fullName>
        <ecNumber evidence="1">7.1.2.2</ecNumber>
    </recommendedName>
    <alternativeName>
        <fullName evidence="1">ATP synthase F1 sector subunit beta</fullName>
    </alternativeName>
    <alternativeName>
        <fullName evidence="1">F-ATPase subunit beta</fullName>
    </alternativeName>
</protein>
<accession>Q85V57</accession>
<accession>Q9TMU9</accession>
<organism>
    <name type="scientific">Bowiea volubilis</name>
    <name type="common">Climbing onion</name>
    <name type="synonym">Ophiobostryx volubilis</name>
    <dbReference type="NCBI Taxonomy" id="44987"/>
    <lineage>
        <taxon>Eukaryota</taxon>
        <taxon>Viridiplantae</taxon>
        <taxon>Streptophyta</taxon>
        <taxon>Embryophyta</taxon>
        <taxon>Tracheophyta</taxon>
        <taxon>Spermatophyta</taxon>
        <taxon>Magnoliopsida</taxon>
        <taxon>Liliopsida</taxon>
        <taxon>Asparagales</taxon>
        <taxon>Hyacinthaceae</taxon>
        <taxon>Urgineoideae</taxon>
        <taxon>Bowiea</taxon>
    </lineage>
</organism>
<proteinExistence type="inferred from homology"/>
<comment type="function">
    <text evidence="1">Produces ATP from ADP in the presence of a proton gradient across the membrane. The catalytic sites are hosted primarily by the beta subunits.</text>
</comment>
<comment type="catalytic activity">
    <reaction evidence="1">
        <text>ATP + H2O + 4 H(+)(in) = ADP + phosphate + 5 H(+)(out)</text>
        <dbReference type="Rhea" id="RHEA:57720"/>
        <dbReference type="ChEBI" id="CHEBI:15377"/>
        <dbReference type="ChEBI" id="CHEBI:15378"/>
        <dbReference type="ChEBI" id="CHEBI:30616"/>
        <dbReference type="ChEBI" id="CHEBI:43474"/>
        <dbReference type="ChEBI" id="CHEBI:456216"/>
        <dbReference type="EC" id="7.1.2.2"/>
    </reaction>
</comment>
<comment type="subunit">
    <text evidence="1">F-type ATPases have 2 components, CF(1) - the catalytic core - and CF(0) - the membrane proton channel. CF(1) has five subunits: alpha(3), beta(3), gamma(1), delta(1), epsilon(1). CF(0) has four main subunits: a(1), b(1), b'(1) and c(9-12).</text>
</comment>
<comment type="subcellular location">
    <subcellularLocation>
        <location evidence="1">Plastid</location>
        <location evidence="1">Chloroplast thylakoid membrane</location>
        <topology evidence="1">Peripheral membrane protein</topology>
    </subcellularLocation>
</comment>
<comment type="similarity">
    <text evidence="1">Belongs to the ATPase alpha/beta chains family.</text>
</comment>
<comment type="sequence caution" evidence="2">
    <conflict type="erroneous initiation">
        <sequence resource="EMBL-CDS" id="CAD48087"/>
    </conflict>
</comment>
<sequence>MRINPTTSGPAVSTLEEKNLGRIAQIIGPVLDVVFPPGKMPNIYNALVVKGHDTVGQQINVTCEVQQLLGNNRVRAVAMSATDGLTRGMKVIDTGAPLSVPVGGATLGRIFNVLGEPVDNFGPVDTRITSPIHRSAPAFIQLDTKLSIFETGIKVVDLLAPYRRGGKIGLFGGAGVGKTVLIMELINNIAKAHGGVSVFGGVGERTREGNDLYMEMKESGVINEKNIAESKVALVYGQMNEPPGARMRVGLTALTMAEYFRDVNEQDVLLFIDNIFRFVQAGSEVSALLGRMPSAVGYQPTLSTEMGSLQERITSTKEGSITSIQAVYVPADDLTDPAPATTFAHLDATTVLSRGLAAKGIYPAVDPLDSTSTMLQPRIVGEEHYETAQRVKQTLQRYKELQDIIAILGLDELSEEDRLTVARARKIERFLSQPFFVAEVFTGSPGKYVGLPETIRGFQLILSGELDGLPEQAFYLVGNIDEATAKAMNLEGEKK</sequence>